<proteinExistence type="inferred from homology"/>
<reference key="1">
    <citation type="submission" date="2002-12" db="EMBL/GenBank/DDBJ databases">
        <title>Complete genome sequence of Vibrio vulnificus CMCP6.</title>
        <authorList>
            <person name="Rhee J.H."/>
            <person name="Kim S.Y."/>
            <person name="Chung S.S."/>
            <person name="Kim J.J."/>
            <person name="Moon Y.H."/>
            <person name="Jeong H."/>
            <person name="Choy H.E."/>
        </authorList>
    </citation>
    <scope>NUCLEOTIDE SEQUENCE [LARGE SCALE GENOMIC DNA]</scope>
    <source>
        <strain>CMCP6</strain>
    </source>
</reference>
<accession>Q8DA40</accession>
<protein>
    <recommendedName>
        <fullName evidence="1">Phenylalanine--tRNA ligase alpha subunit</fullName>
        <ecNumber evidence="1">6.1.1.20</ecNumber>
    </recommendedName>
    <alternativeName>
        <fullName evidence="1">Phenylalanyl-tRNA synthetase alpha subunit</fullName>
        <shortName evidence="1">PheRS</shortName>
    </alternativeName>
</protein>
<comment type="catalytic activity">
    <reaction evidence="1">
        <text>tRNA(Phe) + L-phenylalanine + ATP = L-phenylalanyl-tRNA(Phe) + AMP + diphosphate + H(+)</text>
        <dbReference type="Rhea" id="RHEA:19413"/>
        <dbReference type="Rhea" id="RHEA-COMP:9668"/>
        <dbReference type="Rhea" id="RHEA-COMP:9699"/>
        <dbReference type="ChEBI" id="CHEBI:15378"/>
        <dbReference type="ChEBI" id="CHEBI:30616"/>
        <dbReference type="ChEBI" id="CHEBI:33019"/>
        <dbReference type="ChEBI" id="CHEBI:58095"/>
        <dbReference type="ChEBI" id="CHEBI:78442"/>
        <dbReference type="ChEBI" id="CHEBI:78531"/>
        <dbReference type="ChEBI" id="CHEBI:456215"/>
        <dbReference type="EC" id="6.1.1.20"/>
    </reaction>
</comment>
<comment type="cofactor">
    <cofactor evidence="1">
        <name>Mg(2+)</name>
        <dbReference type="ChEBI" id="CHEBI:18420"/>
    </cofactor>
    <text evidence="1">Binds 2 magnesium ions per tetramer.</text>
</comment>
<comment type="subunit">
    <text evidence="1">Tetramer of two alpha and two beta subunits.</text>
</comment>
<comment type="subcellular location">
    <subcellularLocation>
        <location evidence="1">Cytoplasm</location>
    </subcellularLocation>
</comment>
<comment type="similarity">
    <text evidence="1">Belongs to the class-II aminoacyl-tRNA synthetase family. Phe-tRNA synthetase alpha subunit type 1 subfamily.</text>
</comment>
<sequence>MQHLQEIIANANAAIDAAQSLVALDEVRVQYLGKKGELTAQLQSLGKLPPEERREAGQEINKAKEVVQHALAARKDALQRAELEAKLASETIDVTLPGRRIENGGLHPVTRTVERIEQFFGELGFNVESGPEIEDAFHNFDALNIAADHPARTDHDTFFFNPDLMLRTHTSGVQIRTMENGKPPFRFIAPGRVYRNDYDQTHTPMFHQVEGMLVDENVNFAQLKGILHDFLCNFFEEEVEVRFRPSYFPFTEPSAEVDVKGKNGKWLEVLGCGMVHPNVLRSVGIDPEKYSGFAFGMGVERLTMLRYGVNDLRAFFENDLRFLKQFK</sequence>
<feature type="chain" id="PRO_0000126793" description="Phenylalanine--tRNA ligase alpha subunit">
    <location>
        <begin position="1"/>
        <end position="327"/>
    </location>
</feature>
<feature type="binding site" evidence="1">
    <location>
        <position position="252"/>
    </location>
    <ligand>
        <name>Mg(2+)</name>
        <dbReference type="ChEBI" id="CHEBI:18420"/>
        <note>shared with beta subunit</note>
    </ligand>
</feature>
<keyword id="KW-0030">Aminoacyl-tRNA synthetase</keyword>
<keyword id="KW-0067">ATP-binding</keyword>
<keyword id="KW-0963">Cytoplasm</keyword>
<keyword id="KW-0436">Ligase</keyword>
<keyword id="KW-0460">Magnesium</keyword>
<keyword id="KW-0479">Metal-binding</keyword>
<keyword id="KW-0547">Nucleotide-binding</keyword>
<keyword id="KW-0648">Protein biosynthesis</keyword>
<gene>
    <name evidence="1" type="primary">pheS</name>
    <name type="ordered locus">VV1_2370</name>
</gene>
<organism>
    <name type="scientific">Vibrio vulnificus (strain CMCP6)</name>
    <dbReference type="NCBI Taxonomy" id="216895"/>
    <lineage>
        <taxon>Bacteria</taxon>
        <taxon>Pseudomonadati</taxon>
        <taxon>Pseudomonadota</taxon>
        <taxon>Gammaproteobacteria</taxon>
        <taxon>Vibrionales</taxon>
        <taxon>Vibrionaceae</taxon>
        <taxon>Vibrio</taxon>
    </lineage>
</organism>
<evidence type="ECO:0000255" key="1">
    <source>
        <dbReference type="HAMAP-Rule" id="MF_00281"/>
    </source>
</evidence>
<name>SYFA_VIBVU</name>
<dbReference type="EC" id="6.1.1.20" evidence="1"/>
<dbReference type="EMBL" id="AE016795">
    <property type="protein sequence ID" value="AAO10744.1"/>
    <property type="molecule type" value="Genomic_DNA"/>
</dbReference>
<dbReference type="RefSeq" id="WP_011080237.1">
    <property type="nucleotide sequence ID" value="NC_004459.3"/>
</dbReference>
<dbReference type="SMR" id="Q8DA40"/>
<dbReference type="KEGG" id="vvu:VV1_2370"/>
<dbReference type="HOGENOM" id="CLU_025086_0_1_6"/>
<dbReference type="Proteomes" id="UP000002275">
    <property type="component" value="Chromosome 1"/>
</dbReference>
<dbReference type="GO" id="GO:0005737">
    <property type="term" value="C:cytoplasm"/>
    <property type="evidence" value="ECO:0007669"/>
    <property type="project" value="UniProtKB-SubCell"/>
</dbReference>
<dbReference type="GO" id="GO:0005524">
    <property type="term" value="F:ATP binding"/>
    <property type="evidence" value="ECO:0007669"/>
    <property type="project" value="UniProtKB-UniRule"/>
</dbReference>
<dbReference type="GO" id="GO:0000287">
    <property type="term" value="F:magnesium ion binding"/>
    <property type="evidence" value="ECO:0007669"/>
    <property type="project" value="UniProtKB-UniRule"/>
</dbReference>
<dbReference type="GO" id="GO:0004826">
    <property type="term" value="F:phenylalanine-tRNA ligase activity"/>
    <property type="evidence" value="ECO:0007669"/>
    <property type="project" value="UniProtKB-UniRule"/>
</dbReference>
<dbReference type="GO" id="GO:0000049">
    <property type="term" value="F:tRNA binding"/>
    <property type="evidence" value="ECO:0007669"/>
    <property type="project" value="InterPro"/>
</dbReference>
<dbReference type="GO" id="GO:0006432">
    <property type="term" value="P:phenylalanyl-tRNA aminoacylation"/>
    <property type="evidence" value="ECO:0007669"/>
    <property type="project" value="UniProtKB-UniRule"/>
</dbReference>
<dbReference type="CDD" id="cd00496">
    <property type="entry name" value="PheRS_alpha_core"/>
    <property type="match status" value="1"/>
</dbReference>
<dbReference type="FunFam" id="3.30.930.10:FF:000003">
    <property type="entry name" value="Phenylalanine--tRNA ligase alpha subunit"/>
    <property type="match status" value="1"/>
</dbReference>
<dbReference type="Gene3D" id="3.30.930.10">
    <property type="entry name" value="Bira Bifunctional Protein, Domain 2"/>
    <property type="match status" value="1"/>
</dbReference>
<dbReference type="HAMAP" id="MF_00281">
    <property type="entry name" value="Phe_tRNA_synth_alpha1"/>
    <property type="match status" value="1"/>
</dbReference>
<dbReference type="InterPro" id="IPR006195">
    <property type="entry name" value="aa-tRNA-synth_II"/>
</dbReference>
<dbReference type="InterPro" id="IPR045864">
    <property type="entry name" value="aa-tRNA-synth_II/BPL/LPL"/>
</dbReference>
<dbReference type="InterPro" id="IPR004529">
    <property type="entry name" value="Phe-tRNA-synth_IIc_asu"/>
</dbReference>
<dbReference type="InterPro" id="IPR004188">
    <property type="entry name" value="Phe-tRNA_ligase_II_N"/>
</dbReference>
<dbReference type="InterPro" id="IPR022911">
    <property type="entry name" value="Phe_tRNA_ligase_alpha1_bac"/>
</dbReference>
<dbReference type="InterPro" id="IPR002319">
    <property type="entry name" value="Phenylalanyl-tRNA_Synthase"/>
</dbReference>
<dbReference type="InterPro" id="IPR010978">
    <property type="entry name" value="tRNA-bd_arm"/>
</dbReference>
<dbReference type="NCBIfam" id="TIGR00468">
    <property type="entry name" value="pheS"/>
    <property type="match status" value="1"/>
</dbReference>
<dbReference type="PANTHER" id="PTHR11538:SF41">
    <property type="entry name" value="PHENYLALANINE--TRNA LIGASE, MITOCHONDRIAL"/>
    <property type="match status" value="1"/>
</dbReference>
<dbReference type="PANTHER" id="PTHR11538">
    <property type="entry name" value="PHENYLALANYL-TRNA SYNTHETASE"/>
    <property type="match status" value="1"/>
</dbReference>
<dbReference type="Pfam" id="PF02912">
    <property type="entry name" value="Phe_tRNA-synt_N"/>
    <property type="match status" value="1"/>
</dbReference>
<dbReference type="Pfam" id="PF01409">
    <property type="entry name" value="tRNA-synt_2d"/>
    <property type="match status" value="1"/>
</dbReference>
<dbReference type="SUPFAM" id="SSF55681">
    <property type="entry name" value="Class II aaRS and biotin synthetases"/>
    <property type="match status" value="1"/>
</dbReference>
<dbReference type="SUPFAM" id="SSF46589">
    <property type="entry name" value="tRNA-binding arm"/>
    <property type="match status" value="1"/>
</dbReference>
<dbReference type="PROSITE" id="PS50862">
    <property type="entry name" value="AA_TRNA_LIGASE_II"/>
    <property type="match status" value="1"/>
</dbReference>